<gene>
    <name evidence="1" type="primary">rplB</name>
    <name type="ordered locus">Neut_0561</name>
</gene>
<comment type="function">
    <text evidence="1">One of the primary rRNA binding proteins. Required for association of the 30S and 50S subunits to form the 70S ribosome, for tRNA binding and peptide bond formation. It has been suggested to have peptidyltransferase activity; this is somewhat controversial. Makes several contacts with the 16S rRNA in the 70S ribosome.</text>
</comment>
<comment type="subunit">
    <text evidence="1">Part of the 50S ribosomal subunit. Forms a bridge to the 30S subunit in the 70S ribosome.</text>
</comment>
<comment type="similarity">
    <text evidence="1">Belongs to the universal ribosomal protein uL2 family.</text>
</comment>
<proteinExistence type="inferred from homology"/>
<accession>Q0AIJ2</accession>
<name>RL2_NITEC</name>
<protein>
    <recommendedName>
        <fullName evidence="1">Large ribosomal subunit protein uL2</fullName>
    </recommendedName>
    <alternativeName>
        <fullName evidence="3">50S ribosomal protein L2</fullName>
    </alternativeName>
</protein>
<keyword id="KW-0687">Ribonucleoprotein</keyword>
<keyword id="KW-0689">Ribosomal protein</keyword>
<keyword id="KW-0694">RNA-binding</keyword>
<keyword id="KW-0699">rRNA-binding</keyword>
<organism>
    <name type="scientific">Nitrosomonas eutropha (strain DSM 101675 / C91 / Nm57)</name>
    <dbReference type="NCBI Taxonomy" id="335283"/>
    <lineage>
        <taxon>Bacteria</taxon>
        <taxon>Pseudomonadati</taxon>
        <taxon>Pseudomonadota</taxon>
        <taxon>Betaproteobacteria</taxon>
        <taxon>Nitrosomonadales</taxon>
        <taxon>Nitrosomonadaceae</taxon>
        <taxon>Nitrosomonas</taxon>
    </lineage>
</organism>
<feature type="chain" id="PRO_0000309970" description="Large ribosomal subunit protein uL2">
    <location>
        <begin position="1"/>
        <end position="277"/>
    </location>
</feature>
<feature type="region of interest" description="Disordered" evidence="2">
    <location>
        <begin position="223"/>
        <end position="264"/>
    </location>
</feature>
<sequence>MTLKKSKPTSPGQRAVVRSVNSFLYKGNSYSALTEKKKKNSGRNNSGKITVRHIGGGHKHHYRIVDFCRNKDDIPAKVERIEYDPNRSAYLALLCYADGERKYIIAAKDIEVGSYVVNGSGSPVKTGNALPIRNIPVGSVIHCIELKPGKGAQLARSAGSSAQLMAREGDYSQIRLRSGEIRKIHINCRATIGEVGNSEHNLQSIGKAGAVRWRGIRPTVRGVAMNPVDHPHGGGEGKTAAGRHPVSPWGTPSKGSRTRRNKRTVNMIVRSRYSKKG</sequence>
<dbReference type="EMBL" id="CP000450">
    <property type="protein sequence ID" value="ABI58834.1"/>
    <property type="molecule type" value="Genomic_DNA"/>
</dbReference>
<dbReference type="RefSeq" id="WP_011633676.1">
    <property type="nucleotide sequence ID" value="NC_008344.1"/>
</dbReference>
<dbReference type="SMR" id="Q0AIJ2"/>
<dbReference type="STRING" id="335283.Neut_0561"/>
<dbReference type="KEGG" id="net:Neut_0561"/>
<dbReference type="eggNOG" id="COG0090">
    <property type="taxonomic scope" value="Bacteria"/>
</dbReference>
<dbReference type="HOGENOM" id="CLU_036235_2_1_4"/>
<dbReference type="OrthoDB" id="9778722at2"/>
<dbReference type="Proteomes" id="UP000001966">
    <property type="component" value="Chromosome"/>
</dbReference>
<dbReference type="GO" id="GO:0015934">
    <property type="term" value="C:large ribosomal subunit"/>
    <property type="evidence" value="ECO:0007669"/>
    <property type="project" value="InterPro"/>
</dbReference>
<dbReference type="GO" id="GO:0019843">
    <property type="term" value="F:rRNA binding"/>
    <property type="evidence" value="ECO:0007669"/>
    <property type="project" value="UniProtKB-UniRule"/>
</dbReference>
<dbReference type="GO" id="GO:0003735">
    <property type="term" value="F:structural constituent of ribosome"/>
    <property type="evidence" value="ECO:0007669"/>
    <property type="project" value="InterPro"/>
</dbReference>
<dbReference type="GO" id="GO:0016740">
    <property type="term" value="F:transferase activity"/>
    <property type="evidence" value="ECO:0007669"/>
    <property type="project" value="InterPro"/>
</dbReference>
<dbReference type="GO" id="GO:0002181">
    <property type="term" value="P:cytoplasmic translation"/>
    <property type="evidence" value="ECO:0007669"/>
    <property type="project" value="TreeGrafter"/>
</dbReference>
<dbReference type="FunFam" id="2.30.30.30:FF:000001">
    <property type="entry name" value="50S ribosomal protein L2"/>
    <property type="match status" value="1"/>
</dbReference>
<dbReference type="FunFam" id="2.40.50.140:FF:000003">
    <property type="entry name" value="50S ribosomal protein L2"/>
    <property type="match status" value="1"/>
</dbReference>
<dbReference type="FunFam" id="4.10.950.10:FF:000001">
    <property type="entry name" value="50S ribosomal protein L2"/>
    <property type="match status" value="1"/>
</dbReference>
<dbReference type="Gene3D" id="2.30.30.30">
    <property type="match status" value="1"/>
</dbReference>
<dbReference type="Gene3D" id="2.40.50.140">
    <property type="entry name" value="Nucleic acid-binding proteins"/>
    <property type="match status" value="1"/>
</dbReference>
<dbReference type="Gene3D" id="4.10.950.10">
    <property type="entry name" value="Ribosomal protein L2, domain 3"/>
    <property type="match status" value="1"/>
</dbReference>
<dbReference type="HAMAP" id="MF_01320_B">
    <property type="entry name" value="Ribosomal_uL2_B"/>
    <property type="match status" value="1"/>
</dbReference>
<dbReference type="InterPro" id="IPR012340">
    <property type="entry name" value="NA-bd_OB-fold"/>
</dbReference>
<dbReference type="InterPro" id="IPR014722">
    <property type="entry name" value="Rib_uL2_dom2"/>
</dbReference>
<dbReference type="InterPro" id="IPR002171">
    <property type="entry name" value="Ribosomal_uL2"/>
</dbReference>
<dbReference type="InterPro" id="IPR005880">
    <property type="entry name" value="Ribosomal_uL2_bac/org-type"/>
</dbReference>
<dbReference type="InterPro" id="IPR022669">
    <property type="entry name" value="Ribosomal_uL2_C"/>
</dbReference>
<dbReference type="InterPro" id="IPR022671">
    <property type="entry name" value="Ribosomal_uL2_CS"/>
</dbReference>
<dbReference type="InterPro" id="IPR014726">
    <property type="entry name" value="Ribosomal_uL2_dom3"/>
</dbReference>
<dbReference type="InterPro" id="IPR022666">
    <property type="entry name" value="Ribosomal_uL2_RNA-bd_dom"/>
</dbReference>
<dbReference type="InterPro" id="IPR008991">
    <property type="entry name" value="Translation_prot_SH3-like_sf"/>
</dbReference>
<dbReference type="NCBIfam" id="TIGR01171">
    <property type="entry name" value="rplB_bact"/>
    <property type="match status" value="1"/>
</dbReference>
<dbReference type="PANTHER" id="PTHR13691:SF5">
    <property type="entry name" value="LARGE RIBOSOMAL SUBUNIT PROTEIN UL2M"/>
    <property type="match status" value="1"/>
</dbReference>
<dbReference type="PANTHER" id="PTHR13691">
    <property type="entry name" value="RIBOSOMAL PROTEIN L2"/>
    <property type="match status" value="1"/>
</dbReference>
<dbReference type="Pfam" id="PF00181">
    <property type="entry name" value="Ribosomal_L2"/>
    <property type="match status" value="1"/>
</dbReference>
<dbReference type="Pfam" id="PF03947">
    <property type="entry name" value="Ribosomal_L2_C"/>
    <property type="match status" value="1"/>
</dbReference>
<dbReference type="PIRSF" id="PIRSF002158">
    <property type="entry name" value="Ribosomal_L2"/>
    <property type="match status" value="1"/>
</dbReference>
<dbReference type="SMART" id="SM01383">
    <property type="entry name" value="Ribosomal_L2"/>
    <property type="match status" value="1"/>
</dbReference>
<dbReference type="SMART" id="SM01382">
    <property type="entry name" value="Ribosomal_L2_C"/>
    <property type="match status" value="1"/>
</dbReference>
<dbReference type="SUPFAM" id="SSF50249">
    <property type="entry name" value="Nucleic acid-binding proteins"/>
    <property type="match status" value="1"/>
</dbReference>
<dbReference type="SUPFAM" id="SSF50104">
    <property type="entry name" value="Translation proteins SH3-like domain"/>
    <property type="match status" value="1"/>
</dbReference>
<dbReference type="PROSITE" id="PS00467">
    <property type="entry name" value="RIBOSOMAL_L2"/>
    <property type="match status" value="1"/>
</dbReference>
<reference key="1">
    <citation type="journal article" date="2007" name="Environ. Microbiol.">
        <title>Whole-genome analysis of the ammonia-oxidizing bacterium, Nitrosomonas eutropha C91: implications for niche adaptation.</title>
        <authorList>
            <person name="Stein L.Y."/>
            <person name="Arp D.J."/>
            <person name="Berube P.M."/>
            <person name="Chain P.S."/>
            <person name="Hauser L."/>
            <person name="Jetten M.S."/>
            <person name="Klotz M.G."/>
            <person name="Larimer F.W."/>
            <person name="Norton J.M."/>
            <person name="Op den Camp H.J.M."/>
            <person name="Shin M."/>
            <person name="Wei X."/>
        </authorList>
    </citation>
    <scope>NUCLEOTIDE SEQUENCE [LARGE SCALE GENOMIC DNA]</scope>
    <source>
        <strain>DSM 101675 / C91 / Nm57</strain>
    </source>
</reference>
<evidence type="ECO:0000255" key="1">
    <source>
        <dbReference type="HAMAP-Rule" id="MF_01320"/>
    </source>
</evidence>
<evidence type="ECO:0000256" key="2">
    <source>
        <dbReference type="SAM" id="MobiDB-lite"/>
    </source>
</evidence>
<evidence type="ECO:0000305" key="3"/>